<gene>
    <name evidence="1" type="primary">rex</name>
    <name type="ordered locus">GK0242</name>
</gene>
<accession>Q5L3F3</accession>
<reference key="1">
    <citation type="journal article" date="2004" name="Nucleic Acids Res.">
        <title>Thermoadaptation trait revealed by the genome sequence of thermophilic Geobacillus kaustophilus.</title>
        <authorList>
            <person name="Takami H."/>
            <person name="Takaki Y."/>
            <person name="Chee G.-J."/>
            <person name="Nishi S."/>
            <person name="Shimamura S."/>
            <person name="Suzuki H."/>
            <person name="Matsui S."/>
            <person name="Uchiyama I."/>
        </authorList>
    </citation>
    <scope>NUCLEOTIDE SEQUENCE [LARGE SCALE GENOMIC DNA]</scope>
    <source>
        <strain>HTA426</strain>
    </source>
</reference>
<dbReference type="EMBL" id="BA000043">
    <property type="protein sequence ID" value="BAD74527.1"/>
    <property type="molecule type" value="Genomic_DNA"/>
</dbReference>
<dbReference type="RefSeq" id="WP_011229751.1">
    <property type="nucleotide sequence ID" value="NC_006510.1"/>
</dbReference>
<dbReference type="SMR" id="Q5L3F3"/>
<dbReference type="STRING" id="235909.GK0242"/>
<dbReference type="KEGG" id="gka:GK0242"/>
<dbReference type="eggNOG" id="COG2344">
    <property type="taxonomic scope" value="Bacteria"/>
</dbReference>
<dbReference type="HOGENOM" id="CLU_061534_1_1_9"/>
<dbReference type="Proteomes" id="UP000001172">
    <property type="component" value="Chromosome"/>
</dbReference>
<dbReference type="GO" id="GO:0005737">
    <property type="term" value="C:cytoplasm"/>
    <property type="evidence" value="ECO:0007669"/>
    <property type="project" value="UniProtKB-SubCell"/>
</dbReference>
<dbReference type="GO" id="GO:0003677">
    <property type="term" value="F:DNA binding"/>
    <property type="evidence" value="ECO:0007669"/>
    <property type="project" value="UniProtKB-UniRule"/>
</dbReference>
<dbReference type="GO" id="GO:0003700">
    <property type="term" value="F:DNA-binding transcription factor activity"/>
    <property type="evidence" value="ECO:0007669"/>
    <property type="project" value="UniProtKB-UniRule"/>
</dbReference>
<dbReference type="GO" id="GO:0045892">
    <property type="term" value="P:negative regulation of DNA-templated transcription"/>
    <property type="evidence" value="ECO:0007669"/>
    <property type="project" value="InterPro"/>
</dbReference>
<dbReference type="GO" id="GO:0051775">
    <property type="term" value="P:response to redox state"/>
    <property type="evidence" value="ECO:0007669"/>
    <property type="project" value="InterPro"/>
</dbReference>
<dbReference type="Gene3D" id="3.40.50.720">
    <property type="entry name" value="NAD(P)-binding Rossmann-like Domain"/>
    <property type="match status" value="1"/>
</dbReference>
<dbReference type="Gene3D" id="1.10.10.10">
    <property type="entry name" value="Winged helix-like DNA-binding domain superfamily/Winged helix DNA-binding domain"/>
    <property type="match status" value="1"/>
</dbReference>
<dbReference type="HAMAP" id="MF_01131">
    <property type="entry name" value="Rex"/>
    <property type="match status" value="1"/>
</dbReference>
<dbReference type="InterPro" id="IPR003781">
    <property type="entry name" value="CoA-bd"/>
</dbReference>
<dbReference type="InterPro" id="IPR036291">
    <property type="entry name" value="NAD(P)-bd_dom_sf"/>
</dbReference>
<dbReference type="InterPro" id="IPR009718">
    <property type="entry name" value="Rex_DNA-bd_C_dom"/>
</dbReference>
<dbReference type="InterPro" id="IPR022876">
    <property type="entry name" value="Tscrpt_rep_Rex"/>
</dbReference>
<dbReference type="InterPro" id="IPR036388">
    <property type="entry name" value="WH-like_DNA-bd_sf"/>
</dbReference>
<dbReference type="InterPro" id="IPR036390">
    <property type="entry name" value="WH_DNA-bd_sf"/>
</dbReference>
<dbReference type="NCBIfam" id="NF003989">
    <property type="entry name" value="PRK05472.1-3"/>
    <property type="match status" value="1"/>
</dbReference>
<dbReference type="NCBIfam" id="NF003991">
    <property type="entry name" value="PRK05472.1-5"/>
    <property type="match status" value="1"/>
</dbReference>
<dbReference type="NCBIfam" id="NF003994">
    <property type="entry name" value="PRK05472.2-3"/>
    <property type="match status" value="1"/>
</dbReference>
<dbReference type="NCBIfam" id="NF003995">
    <property type="entry name" value="PRK05472.2-4"/>
    <property type="match status" value="1"/>
</dbReference>
<dbReference type="NCBIfam" id="NF003996">
    <property type="entry name" value="PRK05472.2-5"/>
    <property type="match status" value="1"/>
</dbReference>
<dbReference type="PANTHER" id="PTHR35786">
    <property type="entry name" value="REDOX-SENSING TRANSCRIPTIONAL REPRESSOR REX"/>
    <property type="match status" value="1"/>
</dbReference>
<dbReference type="PANTHER" id="PTHR35786:SF1">
    <property type="entry name" value="REDOX-SENSING TRANSCRIPTIONAL REPRESSOR REX 1"/>
    <property type="match status" value="1"/>
</dbReference>
<dbReference type="Pfam" id="PF02629">
    <property type="entry name" value="CoA_binding"/>
    <property type="match status" value="1"/>
</dbReference>
<dbReference type="Pfam" id="PF06971">
    <property type="entry name" value="Put_DNA-bind_N"/>
    <property type="match status" value="1"/>
</dbReference>
<dbReference type="SMART" id="SM00881">
    <property type="entry name" value="CoA_binding"/>
    <property type="match status" value="1"/>
</dbReference>
<dbReference type="SUPFAM" id="SSF51735">
    <property type="entry name" value="NAD(P)-binding Rossmann-fold domains"/>
    <property type="match status" value="1"/>
</dbReference>
<dbReference type="SUPFAM" id="SSF46785">
    <property type="entry name" value="Winged helix' DNA-binding domain"/>
    <property type="match status" value="1"/>
</dbReference>
<name>REX_GEOKA</name>
<feature type="chain" id="PRO_1000065400" description="Redox-sensing transcriptional repressor Rex">
    <location>
        <begin position="1"/>
        <end position="213"/>
    </location>
</feature>
<feature type="DNA-binding region" description="H-T-H motif" evidence="1">
    <location>
        <begin position="18"/>
        <end position="57"/>
    </location>
</feature>
<feature type="binding site" evidence="1">
    <location>
        <begin position="92"/>
        <end position="97"/>
    </location>
    <ligand>
        <name>NAD(+)</name>
        <dbReference type="ChEBI" id="CHEBI:57540"/>
    </ligand>
</feature>
<sequence length="213" mass="23835">MSNEQPKIPQATAKRLPLYYRFLKNLHASGKQRVSSAELSEAVKVDPATIRRDFSYFGALGKKGYGYNVNYLLSFFRRTLEEDEVTEVALFGVGNLGTAFLNYNFSKNNNTKIVMAFDVDERKVGTTVGGVPVYHLDELEERLHENIPVAILTVPAAAAQALTDRLVVQGIKGILNFTPARLNVPNHIRVHHIDLAIELQSLVYFLKNYPSPS</sequence>
<protein>
    <recommendedName>
        <fullName evidence="1">Redox-sensing transcriptional repressor Rex</fullName>
    </recommendedName>
</protein>
<organism>
    <name type="scientific">Geobacillus kaustophilus (strain HTA426)</name>
    <dbReference type="NCBI Taxonomy" id="235909"/>
    <lineage>
        <taxon>Bacteria</taxon>
        <taxon>Bacillati</taxon>
        <taxon>Bacillota</taxon>
        <taxon>Bacilli</taxon>
        <taxon>Bacillales</taxon>
        <taxon>Anoxybacillaceae</taxon>
        <taxon>Geobacillus</taxon>
        <taxon>Geobacillus thermoleovorans group</taxon>
    </lineage>
</organism>
<comment type="function">
    <text evidence="1">Modulates transcription in response to changes in cellular NADH/NAD(+) redox state.</text>
</comment>
<comment type="subunit">
    <text evidence="1">Homodimer.</text>
</comment>
<comment type="subcellular location">
    <subcellularLocation>
        <location evidence="1">Cytoplasm</location>
    </subcellularLocation>
</comment>
<comment type="similarity">
    <text evidence="1">Belongs to the transcriptional regulatory Rex family.</text>
</comment>
<keyword id="KW-0963">Cytoplasm</keyword>
<keyword id="KW-0238">DNA-binding</keyword>
<keyword id="KW-0520">NAD</keyword>
<keyword id="KW-1185">Reference proteome</keyword>
<keyword id="KW-0678">Repressor</keyword>
<keyword id="KW-0804">Transcription</keyword>
<keyword id="KW-0805">Transcription regulation</keyword>
<proteinExistence type="inferred from homology"/>
<evidence type="ECO:0000255" key="1">
    <source>
        <dbReference type="HAMAP-Rule" id="MF_01131"/>
    </source>
</evidence>